<organism>
    <name type="scientific">Enterococcus faecalis (strain ATCC 700802 / V583)</name>
    <dbReference type="NCBI Taxonomy" id="226185"/>
    <lineage>
        <taxon>Bacteria</taxon>
        <taxon>Bacillati</taxon>
        <taxon>Bacillota</taxon>
        <taxon>Bacilli</taxon>
        <taxon>Lactobacillales</taxon>
        <taxon>Enterococcaceae</taxon>
        <taxon>Enterococcus</taxon>
    </lineage>
</organism>
<keyword id="KW-0030">Aminoacyl-tRNA synthetase</keyword>
<keyword id="KW-0067">ATP-binding</keyword>
<keyword id="KW-0963">Cytoplasm</keyword>
<keyword id="KW-0436">Ligase</keyword>
<keyword id="KW-0479">Metal-binding</keyword>
<keyword id="KW-0547">Nucleotide-binding</keyword>
<keyword id="KW-0648">Protein biosynthesis</keyword>
<keyword id="KW-1185">Reference proteome</keyword>
<keyword id="KW-0694">RNA-binding</keyword>
<keyword id="KW-0820">tRNA-binding</keyword>
<keyword id="KW-0862">Zinc</keyword>
<gene>
    <name evidence="1" type="primary">thrS</name>
    <name type="ordered locus">EF_2858</name>
</gene>
<protein>
    <recommendedName>
        <fullName evidence="1">Threonine--tRNA ligase</fullName>
        <ecNumber evidence="1">6.1.1.3</ecNumber>
    </recommendedName>
    <alternativeName>
        <fullName evidence="1">Threonyl-tRNA synthetase</fullName>
        <shortName evidence="1">ThrRS</shortName>
    </alternativeName>
</protein>
<accession>Q830D0</accession>
<sequence length="645" mass="73724">MSIHITFPDGAVKPFDSGITTFDVAKSISNSLAKKALAGKFNGVLIDLDRPIVEDGSLEIVTPDHEDALGILRHSSAHLMANALRRLFPNIKFGVGPAIDSGFYYDTDNGESPVTAEDLPAIEAEMMKIVKENNPIVRKEISRAEALELFADDPYKVELITDLPEDEIITVYDQGDFVDLCRGVHVPSTGRIQVFKLLSVAGAYWRGNSDNHMMQRIYGTAFFDKKDLKEFIKMREEAKERDHRKLGKELDLFMVSQEVGSGLPFWLPKGATIRRTIERYIVDKEISLGYQHVYTPIMADVELYKTSGHWDHYHEDMFPPMDMGDGEMLVLRPMNCPHHMMVYKNDIHSYRELPIRIAELGMMHRYEKSGALSGLQRVREMTLNDGHTFVRPDQIKDEFKRTLELMVAVYADFNITDYRFRLSYRDPNNTDKYFDDDAMWEKAQAMLKAAMDELELDYFEAEGEAAFYGPKLDVQVKTALGMEETLSTIQLDFLLPERFDLTYVGEDGENTHRPVVIHRGIVSTMERFVAYLTEVYKGAFPTWLAPIQATIIPVSVEAHSEYAYEIKERLQAQGLRVEVDDRNEKMGYKIRASQTQKVPYQLVVGDKEMEDATVNVRRYGSKETSVEDLSIFIDSMAAEVHNYSR</sequence>
<dbReference type="EC" id="6.1.1.3" evidence="1"/>
<dbReference type="EMBL" id="AE016830">
    <property type="protein sequence ID" value="AAO82550.1"/>
    <property type="molecule type" value="Genomic_DNA"/>
</dbReference>
<dbReference type="RefSeq" id="NP_816480.1">
    <property type="nucleotide sequence ID" value="NC_004668.1"/>
</dbReference>
<dbReference type="RefSeq" id="WP_002356319.1">
    <property type="nucleotide sequence ID" value="NZ_KE136528.1"/>
</dbReference>
<dbReference type="SMR" id="Q830D0"/>
<dbReference type="STRING" id="226185.EF_2858"/>
<dbReference type="EnsemblBacteria" id="AAO82550">
    <property type="protein sequence ID" value="AAO82550"/>
    <property type="gene ID" value="EF_2858"/>
</dbReference>
<dbReference type="KEGG" id="efa:EF2858"/>
<dbReference type="PATRIC" id="fig|226185.45.peg.714"/>
<dbReference type="eggNOG" id="COG0441">
    <property type="taxonomic scope" value="Bacteria"/>
</dbReference>
<dbReference type="HOGENOM" id="CLU_008554_0_1_9"/>
<dbReference type="Proteomes" id="UP000001415">
    <property type="component" value="Chromosome"/>
</dbReference>
<dbReference type="GO" id="GO:0005737">
    <property type="term" value="C:cytoplasm"/>
    <property type="evidence" value="ECO:0007669"/>
    <property type="project" value="UniProtKB-SubCell"/>
</dbReference>
<dbReference type="GO" id="GO:0005524">
    <property type="term" value="F:ATP binding"/>
    <property type="evidence" value="ECO:0007669"/>
    <property type="project" value="UniProtKB-UniRule"/>
</dbReference>
<dbReference type="GO" id="GO:0140096">
    <property type="term" value="F:catalytic activity, acting on a protein"/>
    <property type="evidence" value="ECO:0007669"/>
    <property type="project" value="UniProtKB-ARBA"/>
</dbReference>
<dbReference type="GO" id="GO:0046872">
    <property type="term" value="F:metal ion binding"/>
    <property type="evidence" value="ECO:0007669"/>
    <property type="project" value="UniProtKB-KW"/>
</dbReference>
<dbReference type="GO" id="GO:0004829">
    <property type="term" value="F:threonine-tRNA ligase activity"/>
    <property type="evidence" value="ECO:0007669"/>
    <property type="project" value="UniProtKB-UniRule"/>
</dbReference>
<dbReference type="GO" id="GO:0016740">
    <property type="term" value="F:transferase activity"/>
    <property type="evidence" value="ECO:0007669"/>
    <property type="project" value="UniProtKB-ARBA"/>
</dbReference>
<dbReference type="GO" id="GO:0000049">
    <property type="term" value="F:tRNA binding"/>
    <property type="evidence" value="ECO:0007669"/>
    <property type="project" value="UniProtKB-KW"/>
</dbReference>
<dbReference type="GO" id="GO:0006435">
    <property type="term" value="P:threonyl-tRNA aminoacylation"/>
    <property type="evidence" value="ECO:0007669"/>
    <property type="project" value="UniProtKB-UniRule"/>
</dbReference>
<dbReference type="CDD" id="cd01667">
    <property type="entry name" value="TGS_ThrRS"/>
    <property type="match status" value="1"/>
</dbReference>
<dbReference type="CDD" id="cd00860">
    <property type="entry name" value="ThrRS_anticodon"/>
    <property type="match status" value="1"/>
</dbReference>
<dbReference type="CDD" id="cd00771">
    <property type="entry name" value="ThrRS_core"/>
    <property type="match status" value="1"/>
</dbReference>
<dbReference type="FunFam" id="3.10.20.30:FF:000005">
    <property type="entry name" value="Threonine--tRNA ligase"/>
    <property type="match status" value="1"/>
</dbReference>
<dbReference type="FunFam" id="3.30.54.20:FF:000002">
    <property type="entry name" value="Threonine--tRNA ligase"/>
    <property type="match status" value="1"/>
</dbReference>
<dbReference type="FunFam" id="3.30.930.10:FF:000002">
    <property type="entry name" value="Threonine--tRNA ligase"/>
    <property type="match status" value="1"/>
</dbReference>
<dbReference type="FunFam" id="3.40.50.800:FF:000001">
    <property type="entry name" value="Threonine--tRNA ligase"/>
    <property type="match status" value="1"/>
</dbReference>
<dbReference type="FunFam" id="3.30.980.10:FF:000005">
    <property type="entry name" value="Threonyl-tRNA synthetase, mitochondrial"/>
    <property type="match status" value="1"/>
</dbReference>
<dbReference type="Gene3D" id="3.10.20.30">
    <property type="match status" value="1"/>
</dbReference>
<dbReference type="Gene3D" id="3.40.50.800">
    <property type="entry name" value="Anticodon-binding domain"/>
    <property type="match status" value="1"/>
</dbReference>
<dbReference type="Gene3D" id="3.30.930.10">
    <property type="entry name" value="Bira Bifunctional Protein, Domain 2"/>
    <property type="match status" value="1"/>
</dbReference>
<dbReference type="Gene3D" id="3.30.980.10">
    <property type="entry name" value="Threonyl-trna Synthetase, Chain A, domain 2"/>
    <property type="match status" value="1"/>
</dbReference>
<dbReference type="HAMAP" id="MF_00184">
    <property type="entry name" value="Thr_tRNA_synth"/>
    <property type="match status" value="1"/>
</dbReference>
<dbReference type="InterPro" id="IPR002314">
    <property type="entry name" value="aa-tRNA-synt_IIb"/>
</dbReference>
<dbReference type="InterPro" id="IPR006195">
    <property type="entry name" value="aa-tRNA-synth_II"/>
</dbReference>
<dbReference type="InterPro" id="IPR045864">
    <property type="entry name" value="aa-tRNA-synth_II/BPL/LPL"/>
</dbReference>
<dbReference type="InterPro" id="IPR004154">
    <property type="entry name" value="Anticodon-bd"/>
</dbReference>
<dbReference type="InterPro" id="IPR036621">
    <property type="entry name" value="Anticodon-bd_dom_sf"/>
</dbReference>
<dbReference type="InterPro" id="IPR012675">
    <property type="entry name" value="Beta-grasp_dom_sf"/>
</dbReference>
<dbReference type="InterPro" id="IPR004095">
    <property type="entry name" value="TGS"/>
</dbReference>
<dbReference type="InterPro" id="IPR012676">
    <property type="entry name" value="TGS-like"/>
</dbReference>
<dbReference type="InterPro" id="IPR002320">
    <property type="entry name" value="Thr-tRNA-ligase_IIa"/>
</dbReference>
<dbReference type="InterPro" id="IPR018163">
    <property type="entry name" value="Thr/Ala-tRNA-synth_IIc_edit"/>
</dbReference>
<dbReference type="InterPro" id="IPR047246">
    <property type="entry name" value="ThrRS_anticodon"/>
</dbReference>
<dbReference type="InterPro" id="IPR033728">
    <property type="entry name" value="ThrRS_core"/>
</dbReference>
<dbReference type="InterPro" id="IPR012947">
    <property type="entry name" value="tRNA_SAD"/>
</dbReference>
<dbReference type="NCBIfam" id="TIGR00418">
    <property type="entry name" value="thrS"/>
    <property type="match status" value="1"/>
</dbReference>
<dbReference type="PANTHER" id="PTHR11451:SF56">
    <property type="entry name" value="THREONINE--TRNA LIGASE 1"/>
    <property type="match status" value="1"/>
</dbReference>
<dbReference type="PANTHER" id="PTHR11451">
    <property type="entry name" value="THREONINE-TRNA LIGASE"/>
    <property type="match status" value="1"/>
</dbReference>
<dbReference type="Pfam" id="PF03129">
    <property type="entry name" value="HGTP_anticodon"/>
    <property type="match status" value="1"/>
</dbReference>
<dbReference type="Pfam" id="PF02824">
    <property type="entry name" value="TGS"/>
    <property type="match status" value="1"/>
</dbReference>
<dbReference type="Pfam" id="PF00587">
    <property type="entry name" value="tRNA-synt_2b"/>
    <property type="match status" value="1"/>
</dbReference>
<dbReference type="Pfam" id="PF07973">
    <property type="entry name" value="tRNA_SAD"/>
    <property type="match status" value="1"/>
</dbReference>
<dbReference type="PRINTS" id="PR01047">
    <property type="entry name" value="TRNASYNTHTHR"/>
</dbReference>
<dbReference type="SMART" id="SM00863">
    <property type="entry name" value="tRNA_SAD"/>
    <property type="match status" value="1"/>
</dbReference>
<dbReference type="SUPFAM" id="SSF52954">
    <property type="entry name" value="Class II aaRS ABD-related"/>
    <property type="match status" value="1"/>
</dbReference>
<dbReference type="SUPFAM" id="SSF55681">
    <property type="entry name" value="Class II aaRS and biotin synthetases"/>
    <property type="match status" value="1"/>
</dbReference>
<dbReference type="SUPFAM" id="SSF81271">
    <property type="entry name" value="TGS-like"/>
    <property type="match status" value="1"/>
</dbReference>
<dbReference type="SUPFAM" id="SSF55186">
    <property type="entry name" value="ThrRS/AlaRS common domain"/>
    <property type="match status" value="1"/>
</dbReference>
<dbReference type="PROSITE" id="PS50862">
    <property type="entry name" value="AA_TRNA_LIGASE_II"/>
    <property type="match status" value="1"/>
</dbReference>
<dbReference type="PROSITE" id="PS51880">
    <property type="entry name" value="TGS"/>
    <property type="match status" value="1"/>
</dbReference>
<proteinExistence type="inferred from homology"/>
<comment type="function">
    <text evidence="1">Catalyzes the attachment of threonine to tRNA(Thr) in a two-step reaction: L-threonine is first activated by ATP to form Thr-AMP and then transferred to the acceptor end of tRNA(Thr). Also edits incorrectly charged L-seryl-tRNA(Thr).</text>
</comment>
<comment type="catalytic activity">
    <reaction evidence="1">
        <text>tRNA(Thr) + L-threonine + ATP = L-threonyl-tRNA(Thr) + AMP + diphosphate + H(+)</text>
        <dbReference type="Rhea" id="RHEA:24624"/>
        <dbReference type="Rhea" id="RHEA-COMP:9670"/>
        <dbReference type="Rhea" id="RHEA-COMP:9704"/>
        <dbReference type="ChEBI" id="CHEBI:15378"/>
        <dbReference type="ChEBI" id="CHEBI:30616"/>
        <dbReference type="ChEBI" id="CHEBI:33019"/>
        <dbReference type="ChEBI" id="CHEBI:57926"/>
        <dbReference type="ChEBI" id="CHEBI:78442"/>
        <dbReference type="ChEBI" id="CHEBI:78534"/>
        <dbReference type="ChEBI" id="CHEBI:456215"/>
        <dbReference type="EC" id="6.1.1.3"/>
    </reaction>
</comment>
<comment type="cofactor">
    <cofactor evidence="1">
        <name>Zn(2+)</name>
        <dbReference type="ChEBI" id="CHEBI:29105"/>
    </cofactor>
    <text evidence="1">Binds 1 zinc ion per subunit.</text>
</comment>
<comment type="subunit">
    <text evidence="1">Homodimer.</text>
</comment>
<comment type="subcellular location">
    <subcellularLocation>
        <location evidence="1">Cytoplasm</location>
    </subcellularLocation>
</comment>
<comment type="similarity">
    <text evidence="1">Belongs to the class-II aminoacyl-tRNA synthetase family.</text>
</comment>
<reference key="1">
    <citation type="journal article" date="2003" name="Science">
        <title>Role of mobile DNA in the evolution of vancomycin-resistant Enterococcus faecalis.</title>
        <authorList>
            <person name="Paulsen I.T."/>
            <person name="Banerjei L."/>
            <person name="Myers G.S.A."/>
            <person name="Nelson K.E."/>
            <person name="Seshadri R."/>
            <person name="Read T.D."/>
            <person name="Fouts D.E."/>
            <person name="Eisen J.A."/>
            <person name="Gill S.R."/>
            <person name="Heidelberg J.F."/>
            <person name="Tettelin H."/>
            <person name="Dodson R.J."/>
            <person name="Umayam L.A."/>
            <person name="Brinkac L.M."/>
            <person name="Beanan M.J."/>
            <person name="Daugherty S.C."/>
            <person name="DeBoy R.T."/>
            <person name="Durkin S.A."/>
            <person name="Kolonay J.F."/>
            <person name="Madupu R."/>
            <person name="Nelson W.C."/>
            <person name="Vamathevan J.J."/>
            <person name="Tran B."/>
            <person name="Upton J."/>
            <person name="Hansen T."/>
            <person name="Shetty J."/>
            <person name="Khouri H.M."/>
            <person name="Utterback T.R."/>
            <person name="Radune D."/>
            <person name="Ketchum K.A."/>
            <person name="Dougherty B.A."/>
            <person name="Fraser C.M."/>
        </authorList>
    </citation>
    <scope>NUCLEOTIDE SEQUENCE [LARGE SCALE GENOMIC DNA]</scope>
    <source>
        <strain>ATCC 700802 / V583</strain>
    </source>
</reference>
<name>SYT_ENTFA</name>
<feature type="chain" id="PRO_0000100978" description="Threonine--tRNA ligase">
    <location>
        <begin position="1"/>
        <end position="645"/>
    </location>
</feature>
<feature type="domain" description="TGS" evidence="2">
    <location>
        <begin position="1"/>
        <end position="62"/>
    </location>
</feature>
<feature type="region of interest" description="Catalytic" evidence="1">
    <location>
        <begin position="242"/>
        <end position="541"/>
    </location>
</feature>
<feature type="binding site" evidence="1">
    <location>
        <position position="336"/>
    </location>
    <ligand>
        <name>Zn(2+)</name>
        <dbReference type="ChEBI" id="CHEBI:29105"/>
    </ligand>
</feature>
<feature type="binding site" evidence="1">
    <location>
        <position position="387"/>
    </location>
    <ligand>
        <name>Zn(2+)</name>
        <dbReference type="ChEBI" id="CHEBI:29105"/>
    </ligand>
</feature>
<feature type="binding site" evidence="1">
    <location>
        <position position="518"/>
    </location>
    <ligand>
        <name>Zn(2+)</name>
        <dbReference type="ChEBI" id="CHEBI:29105"/>
    </ligand>
</feature>
<evidence type="ECO:0000255" key="1">
    <source>
        <dbReference type="HAMAP-Rule" id="MF_00184"/>
    </source>
</evidence>
<evidence type="ECO:0000255" key="2">
    <source>
        <dbReference type="PROSITE-ProRule" id="PRU01228"/>
    </source>
</evidence>